<feature type="chain" id="PRO_1000127874" description="ATP synthase epsilon chain">
    <location>
        <begin position="1"/>
        <end position="139"/>
    </location>
</feature>
<sequence length="139" mass="15185">MAENSVLTVSIVTPDGQVYDDDQVTMLVVNTKEGELGILPNHVPVIAALAIDEVRVKHSQEEDVIAVNGGFVEFSENTATIVADTAENQSDIDVARAESAKKRAEATIRKAQQAHDNSELRRAQISLRRAINRINVSKH</sequence>
<reference key="1">
    <citation type="journal article" date="2006" name="Proc. Natl. Acad. Sci. U.S.A.">
        <title>Comparative genomics of the lactic acid bacteria.</title>
        <authorList>
            <person name="Makarova K.S."/>
            <person name="Slesarev A."/>
            <person name="Wolf Y.I."/>
            <person name="Sorokin A."/>
            <person name="Mirkin B."/>
            <person name="Koonin E.V."/>
            <person name="Pavlov A."/>
            <person name="Pavlova N."/>
            <person name="Karamychev V."/>
            <person name="Polouchine N."/>
            <person name="Shakhova V."/>
            <person name="Grigoriev I."/>
            <person name="Lou Y."/>
            <person name="Rohksar D."/>
            <person name="Lucas S."/>
            <person name="Huang K."/>
            <person name="Goodstein D.M."/>
            <person name="Hawkins T."/>
            <person name="Plengvidhya V."/>
            <person name="Welker D."/>
            <person name="Hughes J."/>
            <person name="Goh Y."/>
            <person name="Benson A."/>
            <person name="Baldwin K."/>
            <person name="Lee J.-H."/>
            <person name="Diaz-Muniz I."/>
            <person name="Dosti B."/>
            <person name="Smeianov V."/>
            <person name="Wechter W."/>
            <person name="Barabote R."/>
            <person name="Lorca G."/>
            <person name="Altermann E."/>
            <person name="Barrangou R."/>
            <person name="Ganesan B."/>
            <person name="Xie Y."/>
            <person name="Rawsthorne H."/>
            <person name="Tamir D."/>
            <person name="Parker C."/>
            <person name="Breidt F."/>
            <person name="Broadbent J.R."/>
            <person name="Hutkins R."/>
            <person name="O'Sullivan D."/>
            <person name="Steele J."/>
            <person name="Unlu G."/>
            <person name="Saier M.H. Jr."/>
            <person name="Klaenhammer T."/>
            <person name="Richardson P."/>
            <person name="Kozyavkin S."/>
            <person name="Weimer B.C."/>
            <person name="Mills D.A."/>
        </authorList>
    </citation>
    <scope>NUCLEOTIDE SEQUENCE [LARGE SCALE GENOMIC DNA]</scope>
    <source>
        <strain>ATCC 25745 / CCUG 21536 / LMG 10740 / 183-1w</strain>
    </source>
</reference>
<comment type="function">
    <text evidence="1">Produces ATP from ADP in the presence of a proton gradient across the membrane.</text>
</comment>
<comment type="subunit">
    <text evidence="1">F-type ATPases have 2 components, CF(1) - the catalytic core - and CF(0) - the membrane proton channel. CF(1) has five subunits: alpha(3), beta(3), gamma(1), delta(1), epsilon(1). CF(0) has three main subunits: a, b and c.</text>
</comment>
<comment type="subcellular location">
    <subcellularLocation>
        <location evidence="1">Cell membrane</location>
        <topology evidence="1">Peripheral membrane protein</topology>
    </subcellularLocation>
</comment>
<comment type="similarity">
    <text evidence="1">Belongs to the ATPase epsilon chain family.</text>
</comment>
<proteinExistence type="inferred from homology"/>
<name>ATPE_PEDPA</name>
<evidence type="ECO:0000255" key="1">
    <source>
        <dbReference type="HAMAP-Rule" id="MF_00530"/>
    </source>
</evidence>
<keyword id="KW-0066">ATP synthesis</keyword>
<keyword id="KW-1003">Cell membrane</keyword>
<keyword id="KW-0139">CF(1)</keyword>
<keyword id="KW-0375">Hydrogen ion transport</keyword>
<keyword id="KW-0406">Ion transport</keyword>
<keyword id="KW-0472">Membrane</keyword>
<keyword id="KW-0813">Transport</keyword>
<protein>
    <recommendedName>
        <fullName evidence="1">ATP synthase epsilon chain</fullName>
    </recommendedName>
    <alternativeName>
        <fullName evidence="1">ATP synthase F1 sector epsilon subunit</fullName>
    </alternativeName>
    <alternativeName>
        <fullName evidence="1">F-ATPase epsilon subunit</fullName>
    </alternativeName>
</protein>
<dbReference type="EMBL" id="CP000422">
    <property type="protein sequence ID" value="ABJ68357.1"/>
    <property type="molecule type" value="Genomic_DNA"/>
</dbReference>
<dbReference type="RefSeq" id="WP_011673609.1">
    <property type="nucleotide sequence ID" value="NC_008525.1"/>
</dbReference>
<dbReference type="SMR" id="Q03EL5"/>
<dbReference type="STRING" id="278197.PEPE_1316"/>
<dbReference type="GeneID" id="33061485"/>
<dbReference type="KEGG" id="ppe:PEPE_1316"/>
<dbReference type="eggNOG" id="COG0355">
    <property type="taxonomic scope" value="Bacteria"/>
</dbReference>
<dbReference type="HOGENOM" id="CLU_084338_1_0_9"/>
<dbReference type="OrthoDB" id="9804110at2"/>
<dbReference type="Proteomes" id="UP000000773">
    <property type="component" value="Chromosome"/>
</dbReference>
<dbReference type="GO" id="GO:0005886">
    <property type="term" value="C:plasma membrane"/>
    <property type="evidence" value="ECO:0007669"/>
    <property type="project" value="UniProtKB-SubCell"/>
</dbReference>
<dbReference type="GO" id="GO:0045259">
    <property type="term" value="C:proton-transporting ATP synthase complex"/>
    <property type="evidence" value="ECO:0007669"/>
    <property type="project" value="UniProtKB-KW"/>
</dbReference>
<dbReference type="GO" id="GO:0005524">
    <property type="term" value="F:ATP binding"/>
    <property type="evidence" value="ECO:0007669"/>
    <property type="project" value="UniProtKB-UniRule"/>
</dbReference>
<dbReference type="GO" id="GO:0046933">
    <property type="term" value="F:proton-transporting ATP synthase activity, rotational mechanism"/>
    <property type="evidence" value="ECO:0007669"/>
    <property type="project" value="UniProtKB-UniRule"/>
</dbReference>
<dbReference type="CDD" id="cd12152">
    <property type="entry name" value="F1-ATPase_delta"/>
    <property type="match status" value="1"/>
</dbReference>
<dbReference type="Gene3D" id="1.20.5.440">
    <property type="entry name" value="ATP synthase delta/epsilon subunit, C-terminal domain"/>
    <property type="match status" value="1"/>
</dbReference>
<dbReference type="Gene3D" id="2.60.15.10">
    <property type="entry name" value="F0F1 ATP synthase delta/epsilon subunit, N-terminal"/>
    <property type="match status" value="1"/>
</dbReference>
<dbReference type="HAMAP" id="MF_00530">
    <property type="entry name" value="ATP_synth_epsil_bac"/>
    <property type="match status" value="1"/>
</dbReference>
<dbReference type="InterPro" id="IPR036794">
    <property type="entry name" value="ATP_F1_dsu/esu_C_sf"/>
</dbReference>
<dbReference type="InterPro" id="IPR001469">
    <property type="entry name" value="ATP_synth_F1_dsu/esu"/>
</dbReference>
<dbReference type="InterPro" id="IPR020546">
    <property type="entry name" value="ATP_synth_F1_dsu/esu_N"/>
</dbReference>
<dbReference type="InterPro" id="IPR020547">
    <property type="entry name" value="ATP_synth_F1_esu_C"/>
</dbReference>
<dbReference type="InterPro" id="IPR036771">
    <property type="entry name" value="ATPsynth_dsu/esu_N"/>
</dbReference>
<dbReference type="NCBIfam" id="TIGR01216">
    <property type="entry name" value="ATP_synt_epsi"/>
    <property type="match status" value="1"/>
</dbReference>
<dbReference type="NCBIfam" id="NF001846">
    <property type="entry name" value="PRK00571.1-3"/>
    <property type="match status" value="1"/>
</dbReference>
<dbReference type="PANTHER" id="PTHR13822">
    <property type="entry name" value="ATP SYNTHASE DELTA/EPSILON CHAIN"/>
    <property type="match status" value="1"/>
</dbReference>
<dbReference type="PANTHER" id="PTHR13822:SF10">
    <property type="entry name" value="ATP SYNTHASE EPSILON CHAIN, CHLOROPLASTIC"/>
    <property type="match status" value="1"/>
</dbReference>
<dbReference type="Pfam" id="PF00401">
    <property type="entry name" value="ATP-synt_DE"/>
    <property type="match status" value="1"/>
</dbReference>
<dbReference type="Pfam" id="PF02823">
    <property type="entry name" value="ATP-synt_DE_N"/>
    <property type="match status" value="1"/>
</dbReference>
<dbReference type="SUPFAM" id="SSF46604">
    <property type="entry name" value="Epsilon subunit of F1F0-ATP synthase C-terminal domain"/>
    <property type="match status" value="1"/>
</dbReference>
<dbReference type="SUPFAM" id="SSF51344">
    <property type="entry name" value="Epsilon subunit of F1F0-ATP synthase N-terminal domain"/>
    <property type="match status" value="1"/>
</dbReference>
<accession>Q03EL5</accession>
<gene>
    <name evidence="1" type="primary">atpC</name>
    <name type="ordered locus">PEPE_1316</name>
</gene>
<organism>
    <name type="scientific">Pediococcus pentosaceus (strain ATCC 25745 / CCUG 21536 / LMG 10740 / 183-1w)</name>
    <dbReference type="NCBI Taxonomy" id="278197"/>
    <lineage>
        <taxon>Bacteria</taxon>
        <taxon>Bacillati</taxon>
        <taxon>Bacillota</taxon>
        <taxon>Bacilli</taxon>
        <taxon>Lactobacillales</taxon>
        <taxon>Lactobacillaceae</taxon>
        <taxon>Pediococcus</taxon>
    </lineage>
</organism>